<accession>O48073</accession>
<proteinExistence type="inferred from homology"/>
<feature type="chain" id="PRO_0000060944" description="Cytochrome b">
    <location>
        <begin position="1"/>
        <end position="371"/>
    </location>
</feature>
<feature type="transmembrane region" description="Helical" evidence="2">
    <location>
        <begin position="25"/>
        <end position="45"/>
    </location>
</feature>
<feature type="transmembrane region" description="Helical" evidence="2">
    <location>
        <begin position="69"/>
        <end position="90"/>
    </location>
</feature>
<feature type="transmembrane region" description="Helical" evidence="2">
    <location>
        <begin position="105"/>
        <end position="125"/>
    </location>
</feature>
<feature type="transmembrane region" description="Helical" evidence="2">
    <location>
        <begin position="170"/>
        <end position="190"/>
    </location>
</feature>
<feature type="transmembrane region" description="Helical" evidence="2">
    <location>
        <begin position="218"/>
        <end position="238"/>
    </location>
</feature>
<feature type="transmembrane region" description="Helical" evidence="2">
    <location>
        <begin position="280"/>
        <end position="300"/>
    </location>
</feature>
<feature type="transmembrane region" description="Helical" evidence="2">
    <location>
        <begin position="312"/>
        <end position="332"/>
    </location>
</feature>
<feature type="transmembrane region" description="Helical" evidence="2">
    <location>
        <begin position="339"/>
        <end position="358"/>
    </location>
</feature>
<feature type="binding site" description="axial binding residue" evidence="2">
    <location>
        <position position="75"/>
    </location>
    <ligand>
        <name>heme b</name>
        <dbReference type="ChEBI" id="CHEBI:60344"/>
        <label>b562</label>
    </ligand>
    <ligandPart>
        <name>Fe</name>
        <dbReference type="ChEBI" id="CHEBI:18248"/>
    </ligandPart>
</feature>
<feature type="binding site" description="axial binding residue" evidence="2">
    <location>
        <position position="89"/>
    </location>
    <ligand>
        <name>heme b</name>
        <dbReference type="ChEBI" id="CHEBI:60344"/>
        <label>b566</label>
    </ligand>
    <ligandPart>
        <name>Fe</name>
        <dbReference type="ChEBI" id="CHEBI:18248"/>
    </ligandPart>
</feature>
<feature type="binding site" description="axial binding residue" evidence="2">
    <location>
        <position position="174"/>
    </location>
    <ligand>
        <name>heme b</name>
        <dbReference type="ChEBI" id="CHEBI:60344"/>
        <label>b562</label>
    </ligand>
    <ligandPart>
        <name>Fe</name>
        <dbReference type="ChEBI" id="CHEBI:18248"/>
    </ligandPart>
</feature>
<feature type="binding site" description="axial binding residue" evidence="2">
    <location>
        <position position="188"/>
    </location>
    <ligand>
        <name>heme b</name>
        <dbReference type="ChEBI" id="CHEBI:60344"/>
        <label>b566</label>
    </ligand>
    <ligandPart>
        <name>Fe</name>
        <dbReference type="ChEBI" id="CHEBI:18248"/>
    </ligandPart>
</feature>
<feature type="binding site" evidence="2">
    <location>
        <position position="193"/>
    </location>
    <ligand>
        <name>a ubiquinone</name>
        <dbReference type="ChEBI" id="CHEBI:16389"/>
    </ligand>
</feature>
<name>CYB_ERYEL</name>
<dbReference type="EMBL" id="U69818">
    <property type="protein sequence ID" value="AAC01825.1"/>
    <property type="molecule type" value="Genomic_DNA"/>
</dbReference>
<dbReference type="SMR" id="O48073"/>
<dbReference type="GO" id="GO:0005743">
    <property type="term" value="C:mitochondrial inner membrane"/>
    <property type="evidence" value="ECO:0007669"/>
    <property type="project" value="UniProtKB-SubCell"/>
</dbReference>
<dbReference type="GO" id="GO:0045275">
    <property type="term" value="C:respiratory chain complex III"/>
    <property type="evidence" value="ECO:0007669"/>
    <property type="project" value="InterPro"/>
</dbReference>
<dbReference type="GO" id="GO:0046872">
    <property type="term" value="F:metal ion binding"/>
    <property type="evidence" value="ECO:0007669"/>
    <property type="project" value="UniProtKB-KW"/>
</dbReference>
<dbReference type="GO" id="GO:0008121">
    <property type="term" value="F:ubiquinol-cytochrome-c reductase activity"/>
    <property type="evidence" value="ECO:0007669"/>
    <property type="project" value="InterPro"/>
</dbReference>
<dbReference type="GO" id="GO:0006122">
    <property type="term" value="P:mitochondrial electron transport, ubiquinol to cytochrome c"/>
    <property type="evidence" value="ECO:0007669"/>
    <property type="project" value="TreeGrafter"/>
</dbReference>
<dbReference type="CDD" id="cd00290">
    <property type="entry name" value="cytochrome_b_C"/>
    <property type="match status" value="1"/>
</dbReference>
<dbReference type="CDD" id="cd00284">
    <property type="entry name" value="Cytochrome_b_N"/>
    <property type="match status" value="1"/>
</dbReference>
<dbReference type="Gene3D" id="1.20.810.10">
    <property type="entry name" value="Cytochrome Bc1 Complex, Chain C"/>
    <property type="match status" value="1"/>
</dbReference>
<dbReference type="InterPro" id="IPR005798">
    <property type="entry name" value="Cyt_b/b6_C"/>
</dbReference>
<dbReference type="InterPro" id="IPR036150">
    <property type="entry name" value="Cyt_b/b6_C_sf"/>
</dbReference>
<dbReference type="InterPro" id="IPR005797">
    <property type="entry name" value="Cyt_b/b6_N"/>
</dbReference>
<dbReference type="InterPro" id="IPR027387">
    <property type="entry name" value="Cytb/b6-like_sf"/>
</dbReference>
<dbReference type="InterPro" id="IPR030689">
    <property type="entry name" value="Cytochrome_b"/>
</dbReference>
<dbReference type="InterPro" id="IPR048260">
    <property type="entry name" value="Cytochrome_b_C_euk/bac"/>
</dbReference>
<dbReference type="InterPro" id="IPR048259">
    <property type="entry name" value="Cytochrome_b_N_euk/bac"/>
</dbReference>
<dbReference type="InterPro" id="IPR016174">
    <property type="entry name" value="Di-haem_cyt_TM"/>
</dbReference>
<dbReference type="PANTHER" id="PTHR19271">
    <property type="entry name" value="CYTOCHROME B"/>
    <property type="match status" value="1"/>
</dbReference>
<dbReference type="PANTHER" id="PTHR19271:SF16">
    <property type="entry name" value="CYTOCHROME B"/>
    <property type="match status" value="1"/>
</dbReference>
<dbReference type="Pfam" id="PF00032">
    <property type="entry name" value="Cytochrom_B_C"/>
    <property type="match status" value="1"/>
</dbReference>
<dbReference type="Pfam" id="PF00033">
    <property type="entry name" value="Cytochrome_B"/>
    <property type="match status" value="1"/>
</dbReference>
<dbReference type="PIRSF" id="PIRSF038885">
    <property type="entry name" value="COB"/>
    <property type="match status" value="1"/>
</dbReference>
<dbReference type="SUPFAM" id="SSF81648">
    <property type="entry name" value="a domain/subunit of cytochrome bc1 complex (Ubiquinol-cytochrome c reductase)"/>
    <property type="match status" value="1"/>
</dbReference>
<dbReference type="SUPFAM" id="SSF81342">
    <property type="entry name" value="Transmembrane di-heme cytochromes"/>
    <property type="match status" value="1"/>
</dbReference>
<dbReference type="PROSITE" id="PS51003">
    <property type="entry name" value="CYTB_CTER"/>
    <property type="match status" value="1"/>
</dbReference>
<dbReference type="PROSITE" id="PS51002">
    <property type="entry name" value="CYTB_NTER"/>
    <property type="match status" value="1"/>
</dbReference>
<protein>
    <recommendedName>
        <fullName>Cytochrome b</fullName>
    </recommendedName>
    <alternativeName>
        <fullName>Complex III subunit 3</fullName>
    </alternativeName>
    <alternativeName>
        <fullName>Complex III subunit III</fullName>
    </alternativeName>
    <alternativeName>
        <fullName>Cytochrome b-c1 complex subunit 3</fullName>
    </alternativeName>
    <alternativeName>
        <fullName>Ubiquinol-cytochrome-c reductase complex cytochrome b subunit</fullName>
    </alternativeName>
</protein>
<evidence type="ECO:0000250" key="1"/>
<evidence type="ECO:0000250" key="2">
    <source>
        <dbReference type="UniProtKB" id="P00157"/>
    </source>
</evidence>
<evidence type="ECO:0000255" key="3">
    <source>
        <dbReference type="PROSITE-ProRule" id="PRU00967"/>
    </source>
</evidence>
<evidence type="ECO:0000255" key="4">
    <source>
        <dbReference type="PROSITE-ProRule" id="PRU00968"/>
    </source>
</evidence>
<organism>
    <name type="scientific">Eryx elegans</name>
    <name type="common">Central Asian sand boa</name>
    <dbReference type="NCBI Taxonomy" id="51868"/>
    <lineage>
        <taxon>Eukaryota</taxon>
        <taxon>Metazoa</taxon>
        <taxon>Chordata</taxon>
        <taxon>Craniata</taxon>
        <taxon>Vertebrata</taxon>
        <taxon>Euteleostomi</taxon>
        <taxon>Lepidosauria</taxon>
        <taxon>Squamata</taxon>
        <taxon>Bifurcata</taxon>
        <taxon>Unidentata</taxon>
        <taxon>Episquamata</taxon>
        <taxon>Toxicofera</taxon>
        <taxon>Serpentes</taxon>
        <taxon>Henophidia</taxon>
        <taxon>Boidae</taxon>
        <taxon>Erycinae</taxon>
        <taxon>Eryx</taxon>
    </lineage>
</organism>
<gene>
    <name type="primary">MT-CYB</name>
    <name type="synonym">COB</name>
    <name type="synonym">CYTB</name>
    <name type="synonym">MTCYB</name>
</gene>
<comment type="function">
    <text evidence="2">Component of the ubiquinol-cytochrome c reductase complex (complex III or cytochrome b-c1 complex) that is part of the mitochondrial respiratory chain. The b-c1 complex mediates electron transfer from ubiquinol to cytochrome c. Contributes to the generation of a proton gradient across the mitochondrial membrane that is then used for ATP synthesis.</text>
</comment>
<comment type="cofactor">
    <cofactor evidence="2">
        <name>heme b</name>
        <dbReference type="ChEBI" id="CHEBI:60344"/>
    </cofactor>
    <text evidence="2">Binds 2 heme b groups non-covalently.</text>
</comment>
<comment type="subunit">
    <text evidence="2">The cytochrome bc1 complex contains 3 respiratory subunits (MT-CYB, CYC1 and UQCRFS1), 2 core proteins (UQCRC1 and UQCRC2) and probably 6 low-molecular weight proteins.</text>
</comment>
<comment type="subcellular location">
    <subcellularLocation>
        <location evidence="2">Mitochondrion inner membrane</location>
        <topology evidence="2">Multi-pass membrane protein</topology>
    </subcellularLocation>
</comment>
<comment type="miscellaneous">
    <text evidence="1">Heme 1 (or BL or b562) is low-potential and absorbs at about 562 nm, and heme 2 (or BH or b566) is high-potential and absorbs at about 566 nm.</text>
</comment>
<comment type="similarity">
    <text evidence="3 4">Belongs to the cytochrome b family.</text>
</comment>
<comment type="caution">
    <text evidence="2">The full-length protein contains only eight transmembrane helices, not nine as predicted by bioinformatics tools.</text>
</comment>
<geneLocation type="mitochondrion"/>
<keyword id="KW-0249">Electron transport</keyword>
<keyword id="KW-0349">Heme</keyword>
<keyword id="KW-0408">Iron</keyword>
<keyword id="KW-0472">Membrane</keyword>
<keyword id="KW-0479">Metal-binding</keyword>
<keyword id="KW-0496">Mitochondrion</keyword>
<keyword id="KW-0999">Mitochondrion inner membrane</keyword>
<keyword id="KW-0679">Respiratory chain</keyword>
<keyword id="KW-0812">Transmembrane</keyword>
<keyword id="KW-1133">Transmembrane helix</keyword>
<keyword id="KW-0813">Transport</keyword>
<keyword id="KW-0830">Ubiquinone</keyword>
<reference key="1">
    <citation type="thesis" date="1997" institute="Queen's University / Kingston" country="Canada">
        <title>Hic Sunt Serpentes -- molecular phylogenetics and the Boidae (Serpentes: Booidea).</title>
        <authorList>
            <person name="Campbell B.N."/>
        </authorList>
    </citation>
    <scope>NUCLEOTIDE SEQUENCE [GENOMIC DNA]</scope>
</reference>
<sequence>MPHQQMLILFGLLPVATNISTWWNFGSMLLACTSMQVLTGFFLAVHYTANINLAFSSIVHITRDVPYGWMMQNLHAIGASMFFICIYIHIARGLYYGSYLNKKTWLSGTTLLIMLMATAFFGYVLPWGQMSFWAATVITNLLTAIPYLGTTMTTWLWGGFAINDPTLTRFSALHFILSFGIISLLSLHIMLLHEDGWSNPLGTNSDIDKIPFHPYQTYKDLLMLSLVILMLLMTVSFLPDIFNDPENFSKANPLVTPQHIKPEWYFLFAYGILRSIPNKLGGALALAMSIMILLTAPFTHTSTIRSMTFRPIMQLMFWTLVATFAVITWSATKPVEPPFTVISQIASTIYFLFLIMNPILGWVENKIMKHS</sequence>